<accession>P50937</accession>
<accession>Q3J487</accession>
<gene>
    <name type="primary">hisF</name>
    <name type="ordered locus">RHOS4_08290</name>
    <name type="ORF">RSP_2242</name>
</gene>
<name>HIS6_CERS4</name>
<keyword id="KW-0028">Amino-acid biosynthesis</keyword>
<keyword id="KW-0963">Cytoplasm</keyword>
<keyword id="KW-0368">Histidine biosynthesis</keyword>
<keyword id="KW-0456">Lyase</keyword>
<keyword id="KW-1185">Reference proteome</keyword>
<dbReference type="EC" id="4.3.2.10"/>
<dbReference type="EMBL" id="X87256">
    <property type="protein sequence ID" value="CAA60710.1"/>
    <property type="molecule type" value="Genomic_DNA"/>
</dbReference>
<dbReference type="EMBL" id="CP000143">
    <property type="protein sequence ID" value="ABA78397.1"/>
    <property type="molecule type" value="Genomic_DNA"/>
</dbReference>
<dbReference type="PIR" id="S54838">
    <property type="entry name" value="S54838"/>
</dbReference>
<dbReference type="RefSeq" id="WP_009562844.1">
    <property type="nucleotide sequence ID" value="NC_007493.2"/>
</dbReference>
<dbReference type="RefSeq" id="YP_352298.1">
    <property type="nucleotide sequence ID" value="NC_007493.2"/>
</dbReference>
<dbReference type="SMR" id="P50937"/>
<dbReference type="STRING" id="272943.RSP_2242"/>
<dbReference type="EnsemblBacteria" id="ABA78397">
    <property type="protein sequence ID" value="ABA78397"/>
    <property type="gene ID" value="RSP_2242"/>
</dbReference>
<dbReference type="GeneID" id="3719772"/>
<dbReference type="KEGG" id="rsp:RSP_2242"/>
<dbReference type="PATRIC" id="fig|272943.9.peg.1145"/>
<dbReference type="eggNOG" id="COG0107">
    <property type="taxonomic scope" value="Bacteria"/>
</dbReference>
<dbReference type="OrthoDB" id="9781903at2"/>
<dbReference type="PhylomeDB" id="P50937"/>
<dbReference type="UniPathway" id="UPA00031">
    <property type="reaction ID" value="UER00010"/>
</dbReference>
<dbReference type="Proteomes" id="UP000002703">
    <property type="component" value="Chromosome 1"/>
</dbReference>
<dbReference type="GO" id="GO:0005737">
    <property type="term" value="C:cytoplasm"/>
    <property type="evidence" value="ECO:0007669"/>
    <property type="project" value="UniProtKB-SubCell"/>
</dbReference>
<dbReference type="GO" id="GO:0000107">
    <property type="term" value="F:imidazoleglycerol-phosphate synthase activity"/>
    <property type="evidence" value="ECO:0007669"/>
    <property type="project" value="UniProtKB-UniRule"/>
</dbReference>
<dbReference type="GO" id="GO:0016829">
    <property type="term" value="F:lyase activity"/>
    <property type="evidence" value="ECO:0007669"/>
    <property type="project" value="UniProtKB-KW"/>
</dbReference>
<dbReference type="GO" id="GO:0000105">
    <property type="term" value="P:L-histidine biosynthetic process"/>
    <property type="evidence" value="ECO:0007669"/>
    <property type="project" value="UniProtKB-UniRule"/>
</dbReference>
<dbReference type="CDD" id="cd04731">
    <property type="entry name" value="HisF"/>
    <property type="match status" value="1"/>
</dbReference>
<dbReference type="FunFam" id="3.20.20.70:FF:000006">
    <property type="entry name" value="Imidazole glycerol phosphate synthase subunit HisF"/>
    <property type="match status" value="1"/>
</dbReference>
<dbReference type="Gene3D" id="3.20.20.70">
    <property type="entry name" value="Aldolase class I"/>
    <property type="match status" value="1"/>
</dbReference>
<dbReference type="HAMAP" id="MF_01013">
    <property type="entry name" value="HisF"/>
    <property type="match status" value="1"/>
</dbReference>
<dbReference type="InterPro" id="IPR013785">
    <property type="entry name" value="Aldolase_TIM"/>
</dbReference>
<dbReference type="InterPro" id="IPR006062">
    <property type="entry name" value="His_biosynth"/>
</dbReference>
<dbReference type="InterPro" id="IPR004651">
    <property type="entry name" value="HisF"/>
</dbReference>
<dbReference type="InterPro" id="IPR050064">
    <property type="entry name" value="IGPS_HisA/HisF"/>
</dbReference>
<dbReference type="InterPro" id="IPR011060">
    <property type="entry name" value="RibuloseP-bd_barrel"/>
</dbReference>
<dbReference type="NCBIfam" id="TIGR00735">
    <property type="entry name" value="hisF"/>
    <property type="match status" value="1"/>
</dbReference>
<dbReference type="PANTHER" id="PTHR21235:SF2">
    <property type="entry name" value="IMIDAZOLE GLYCEROL PHOSPHATE SYNTHASE HISHF"/>
    <property type="match status" value="1"/>
</dbReference>
<dbReference type="PANTHER" id="PTHR21235">
    <property type="entry name" value="IMIDAZOLE GLYCEROL PHOSPHATE SYNTHASE SUBUNIT HISF/H IGP SYNTHASE SUBUNIT HISF/H"/>
    <property type="match status" value="1"/>
</dbReference>
<dbReference type="Pfam" id="PF00977">
    <property type="entry name" value="His_biosynth"/>
    <property type="match status" value="1"/>
</dbReference>
<dbReference type="SUPFAM" id="SSF51366">
    <property type="entry name" value="Ribulose-phoshate binding barrel"/>
    <property type="match status" value="1"/>
</dbReference>
<comment type="function">
    <text evidence="1">IGPS catalyzes the conversion of PRFAR and glutamine to IGP, AICAR and glutamate. The HisF subunit catalyzes the cyclization activity that produces IGP and AICAR from PRFAR using the ammonia provided by the HisH subunit (By similarity).</text>
</comment>
<comment type="catalytic activity">
    <reaction>
        <text>5-[(5-phospho-1-deoxy-D-ribulos-1-ylimino)methylamino]-1-(5-phospho-beta-D-ribosyl)imidazole-4-carboxamide + L-glutamine = D-erythro-1-(imidazol-4-yl)glycerol 3-phosphate + 5-amino-1-(5-phospho-beta-D-ribosyl)imidazole-4-carboxamide + L-glutamate + H(+)</text>
        <dbReference type="Rhea" id="RHEA:24793"/>
        <dbReference type="ChEBI" id="CHEBI:15378"/>
        <dbReference type="ChEBI" id="CHEBI:29985"/>
        <dbReference type="ChEBI" id="CHEBI:58278"/>
        <dbReference type="ChEBI" id="CHEBI:58359"/>
        <dbReference type="ChEBI" id="CHEBI:58475"/>
        <dbReference type="ChEBI" id="CHEBI:58525"/>
        <dbReference type="EC" id="4.3.2.10"/>
    </reaction>
</comment>
<comment type="pathway">
    <text>Amino-acid biosynthesis; L-histidine biosynthesis; L-histidine from 5-phospho-alpha-D-ribose 1-diphosphate: step 5/9.</text>
</comment>
<comment type="subunit">
    <text evidence="1">Heterodimer of HisH and HisF.</text>
</comment>
<comment type="subcellular location">
    <subcellularLocation>
        <location evidence="1">Cytoplasm</location>
    </subcellularLocation>
</comment>
<comment type="similarity">
    <text evidence="3">Belongs to the HisA/HisF family.</text>
</comment>
<sequence length="253" mass="26243">MLKTRIIPCLDVADGRVVKGVNFVDLRDAGDPVEAARAYDAAGADELCFLDIHATHENRGTMYDLVTRTAEQCFMPLTVGGGVRTHQDVRALLLAGADKVSFNSAAVADPGVVAEAADRFGSQCIVVAIDAKTVAPGRWEIFTHGGRRATGIDAVAFACEMASRGAGEILLTSMDRDGTRAGFNLPLTRAISDAVPIPVIASGGVGTLDHLVEGVTEGGASAVLAASIFHFGEFTIGEAKAHMAAAGIPVRLA</sequence>
<evidence type="ECO:0000250" key="1"/>
<evidence type="ECO:0000255" key="2"/>
<evidence type="ECO:0000305" key="3"/>
<protein>
    <recommendedName>
        <fullName>Imidazole glycerol phosphate synthase subunit HisF</fullName>
        <ecNumber>4.3.2.10</ecNumber>
    </recommendedName>
    <alternativeName>
        <fullName>IGP synthase cyclase subunit</fullName>
    </alternativeName>
    <alternativeName>
        <fullName>IGP synthase subunit HisF</fullName>
    </alternativeName>
    <alternativeName>
        <fullName>ImGP synthase subunit HisF</fullName>
        <shortName>IGPS subunit HisF</shortName>
    </alternativeName>
</protein>
<reference key="1">
    <citation type="submission" date="1995-05" db="EMBL/GenBank/DDBJ databases">
        <authorList>
            <person name="Oriol E."/>
        </authorList>
    </citation>
    <scope>NUCLEOTIDE SEQUENCE [GENOMIC DNA]</scope>
</reference>
<reference key="2">
    <citation type="submission" date="2005-09" db="EMBL/GenBank/DDBJ databases">
        <title>Complete sequence of chromosome 1 of Rhodobacter sphaeroides 2.4.1.</title>
        <authorList>
            <person name="Copeland A."/>
            <person name="Lucas S."/>
            <person name="Lapidus A."/>
            <person name="Barry K."/>
            <person name="Detter J.C."/>
            <person name="Glavina T."/>
            <person name="Hammon N."/>
            <person name="Israni S."/>
            <person name="Pitluck S."/>
            <person name="Richardson P."/>
            <person name="Mackenzie C."/>
            <person name="Choudhary M."/>
            <person name="Larimer F."/>
            <person name="Hauser L.J."/>
            <person name="Land M."/>
            <person name="Donohue T.J."/>
            <person name="Kaplan S."/>
        </authorList>
    </citation>
    <scope>NUCLEOTIDE SEQUENCE [LARGE SCALE GENOMIC DNA]</scope>
    <source>
        <strain>ATCC 17023 / DSM 158 / JCM 6121 / CCUG 31486 / LMG 2827 / NBRC 12203 / NCIMB 8253 / ATH 2.4.1.</strain>
    </source>
</reference>
<organism>
    <name type="scientific">Cereibacter sphaeroides (strain ATCC 17023 / DSM 158 / JCM 6121 / CCUG 31486 / LMG 2827 / NBRC 12203 / NCIMB 8253 / ATH 2.4.1.)</name>
    <name type="common">Rhodobacter sphaeroides</name>
    <dbReference type="NCBI Taxonomy" id="272943"/>
    <lineage>
        <taxon>Bacteria</taxon>
        <taxon>Pseudomonadati</taxon>
        <taxon>Pseudomonadota</taxon>
        <taxon>Alphaproteobacteria</taxon>
        <taxon>Rhodobacterales</taxon>
        <taxon>Paracoccaceae</taxon>
        <taxon>Cereibacter</taxon>
    </lineage>
</organism>
<feature type="chain" id="PRO_0000142219" description="Imidazole glycerol phosphate synthase subunit HisF">
    <location>
        <begin position="1"/>
        <end position="253"/>
    </location>
</feature>
<feature type="active site" evidence="2">
    <location>
        <position position="11"/>
    </location>
</feature>
<feature type="active site" evidence="2">
    <location>
        <position position="130"/>
    </location>
</feature>
<feature type="sequence conflict" description="In Ref. 1; CAA60710." evidence="3" ref="1">
    <original>G</original>
    <variation>A</variation>
    <location>
        <position position="15"/>
    </location>
</feature>
<feature type="sequence conflict" description="In Ref. 1; CAA60710." evidence="3" ref="1">
    <original>AEAADRFG</original>
    <variation>PSRRPLR</variation>
    <location>
        <begin position="114"/>
        <end position="121"/>
    </location>
</feature>
<feature type="sequence conflict" description="In Ref. 1; CAA60710." evidence="3" ref="1">
    <original>A</original>
    <variation>T</variation>
    <location>
        <position position="131"/>
    </location>
</feature>
<proteinExistence type="inferred from homology"/>